<reference key="1">
    <citation type="journal article" date="2012" name="MBio">
        <title>Comparative genome analysis of Trichophyton rubrum and related dermatophytes reveals candidate genes involved in infection.</title>
        <authorList>
            <person name="Martinez D.A."/>
            <person name="Oliver B.G."/>
            <person name="Graeser Y."/>
            <person name="Goldberg J.M."/>
            <person name="Li W."/>
            <person name="Martinez-Rossi N.M."/>
            <person name="Monod M."/>
            <person name="Shelest E."/>
            <person name="Barton R.C."/>
            <person name="Birch E."/>
            <person name="Brakhage A.A."/>
            <person name="Chen Z."/>
            <person name="Gurr S.J."/>
            <person name="Heiman D."/>
            <person name="Heitman J."/>
            <person name="Kosti I."/>
            <person name="Rossi A."/>
            <person name="Saif S."/>
            <person name="Samalova M."/>
            <person name="Saunders C.W."/>
            <person name="Shea T."/>
            <person name="Summerbell R.C."/>
            <person name="Xu J."/>
            <person name="Young S."/>
            <person name="Zeng Q."/>
            <person name="Birren B.W."/>
            <person name="Cuomo C.A."/>
            <person name="White T.C."/>
        </authorList>
    </citation>
    <scope>NUCLEOTIDE SEQUENCE [LARGE SCALE GENOMIC DNA]</scope>
    <source>
        <strain>ATCC MYA-4605 / CBS 113480</strain>
    </source>
</reference>
<comment type="function">
    <text evidence="1">Secreted aspartic-type endopeptidase which is secreted and contributes to virulence.</text>
</comment>
<comment type="subcellular location">
    <subcellularLocation>
        <location evidence="6">Cell membrane</location>
        <topology evidence="6">Lipid-anchor</topology>
        <topology evidence="6">GPI-anchor</topology>
    </subcellularLocation>
</comment>
<comment type="similarity">
    <text evidence="6">Belongs to the peptidase A1 family.</text>
</comment>
<comment type="sequence caution" evidence="6">
    <conflict type="erroneous initiation">
        <sequence resource="EMBL-CDS" id="EEQ28328"/>
    </conflict>
</comment>
<accession>C5FEK4</accession>
<evidence type="ECO:0000250" key="1"/>
<evidence type="ECO:0000255" key="2"/>
<evidence type="ECO:0000255" key="3">
    <source>
        <dbReference type="PROSITE-ProRule" id="PRU01103"/>
    </source>
</evidence>
<evidence type="ECO:0000255" key="4">
    <source>
        <dbReference type="PROSITE-ProRule" id="PRU10094"/>
    </source>
</evidence>
<evidence type="ECO:0000256" key="5">
    <source>
        <dbReference type="SAM" id="MobiDB-lite"/>
    </source>
</evidence>
<evidence type="ECO:0000305" key="6"/>
<protein>
    <recommendedName>
        <fullName>Probable aspartic-type endopeptidase CTSD</fullName>
        <ecNumber>3.4.23.-</ecNumber>
    </recommendedName>
</protein>
<feature type="chain" id="PRO_0000390766" description="Probable aspartic-type endopeptidase CTSD">
    <location>
        <begin position="1" status="less than"/>
        <end position="350"/>
    </location>
</feature>
<feature type="propeptide" id="PRO_0000390767" description="Removed in mature form" evidence="2">
    <location>
        <begin position="351"/>
        <end position="377"/>
    </location>
</feature>
<feature type="domain" description="Peptidase A1" evidence="3">
    <location>
        <begin position="1" status="less than"/>
        <end position="292"/>
    </location>
</feature>
<feature type="region of interest" description="Disordered" evidence="5">
    <location>
        <begin position="296"/>
        <end position="351"/>
    </location>
</feature>
<feature type="compositionally biased region" description="Low complexity" evidence="5">
    <location>
        <begin position="328"/>
        <end position="351"/>
    </location>
</feature>
<feature type="active site" evidence="4">
    <location>
        <position position="4"/>
    </location>
</feature>
<feature type="active site" evidence="4">
    <location>
        <position position="186"/>
    </location>
</feature>
<feature type="lipid moiety-binding region" description="GPI-anchor amidated serine" evidence="2">
    <location>
        <position position="350"/>
    </location>
</feature>
<feature type="glycosylation site" description="N-linked (GlcNAc...) asparagine" evidence="2">
    <location>
        <position position="58"/>
    </location>
</feature>
<feature type="non-terminal residue">
    <location>
        <position position="1"/>
    </location>
</feature>
<gene>
    <name type="primary">CTSD</name>
    <name type="ORF">MCYG_01216</name>
</gene>
<sequence length="377" mass="39731">SLIDTGASRTWVFGSDCTSKSCGAHNTFGKEDSKTIKVTDEKWDVAYGTGKVAGVIVNDTMSFAGFELDTPFGSATTASDDFMSYPMDGILGIGPQDSKAKVPTVIQLLMQQKLLKSNIIGINLQRNSDGATDGQITFGDVDKSKFSGELAYSNVVSGGYQWEIAVDDIIVDGKPLNFQGRSGIVDTGTSFLLLPPDDADLIHSKIPKSAKSSVFYTVPCSTTTNIELSISGVKYAIKPKDYVGYESTTKGICNSLIIGRQAIGPKQWLLGDVFLKNVYSVYDFDKNRVGLAARKYGETKDPPSSSHPPPAPTSNKASGGSPGLPEQSGTSSATTSTTGEPSSGSTASPSAASSVSMSAWLSLAVFLSTASSLILWD</sequence>
<proteinExistence type="inferred from homology"/>
<organism>
    <name type="scientific">Arthroderma otae (strain ATCC MYA-4605 / CBS 113480)</name>
    <name type="common">Microsporum canis</name>
    <dbReference type="NCBI Taxonomy" id="554155"/>
    <lineage>
        <taxon>Eukaryota</taxon>
        <taxon>Fungi</taxon>
        <taxon>Dikarya</taxon>
        <taxon>Ascomycota</taxon>
        <taxon>Pezizomycotina</taxon>
        <taxon>Eurotiomycetes</taxon>
        <taxon>Eurotiomycetidae</taxon>
        <taxon>Onygenales</taxon>
        <taxon>Arthrodermataceae</taxon>
        <taxon>Microsporum</taxon>
    </lineage>
</organism>
<keyword id="KW-0064">Aspartyl protease</keyword>
<keyword id="KW-1003">Cell membrane</keyword>
<keyword id="KW-0325">Glycoprotein</keyword>
<keyword id="KW-0336">GPI-anchor</keyword>
<keyword id="KW-0378">Hydrolase</keyword>
<keyword id="KW-0449">Lipoprotein</keyword>
<keyword id="KW-0472">Membrane</keyword>
<keyword id="KW-0645">Protease</keyword>
<keyword id="KW-1185">Reference proteome</keyword>
<keyword id="KW-0843">Virulence</keyword>
<name>CTSD_ARTOC</name>
<dbReference type="EC" id="3.4.23.-"/>
<dbReference type="EMBL" id="DS995701">
    <property type="protein sequence ID" value="EEQ28328.1"/>
    <property type="status" value="ALT_INIT"/>
    <property type="molecule type" value="Genomic_DNA"/>
</dbReference>
<dbReference type="RefSeq" id="XP_002851112.1">
    <property type="nucleotide sequence ID" value="XM_002851066.1"/>
</dbReference>
<dbReference type="SMR" id="C5FEK4"/>
<dbReference type="STRING" id="554155.C5FEK4"/>
<dbReference type="MEROPS" id="A01.077"/>
<dbReference type="GlyCosmos" id="C5FEK4">
    <property type="glycosylation" value="1 site, No reported glycans"/>
</dbReference>
<dbReference type="GeneID" id="9228653"/>
<dbReference type="eggNOG" id="KOG1339">
    <property type="taxonomic scope" value="Eukaryota"/>
</dbReference>
<dbReference type="HOGENOM" id="CLU_013253_10_0_1"/>
<dbReference type="OrthoDB" id="28208at2759"/>
<dbReference type="Proteomes" id="UP000002035">
    <property type="component" value="Unassembled WGS sequence"/>
</dbReference>
<dbReference type="GO" id="GO:0005886">
    <property type="term" value="C:plasma membrane"/>
    <property type="evidence" value="ECO:0007669"/>
    <property type="project" value="UniProtKB-SubCell"/>
</dbReference>
<dbReference type="GO" id="GO:0098552">
    <property type="term" value="C:side of membrane"/>
    <property type="evidence" value="ECO:0007669"/>
    <property type="project" value="UniProtKB-KW"/>
</dbReference>
<dbReference type="GO" id="GO:0004190">
    <property type="term" value="F:aspartic-type endopeptidase activity"/>
    <property type="evidence" value="ECO:0007669"/>
    <property type="project" value="UniProtKB-KW"/>
</dbReference>
<dbReference type="GO" id="GO:0006508">
    <property type="term" value="P:proteolysis"/>
    <property type="evidence" value="ECO:0007669"/>
    <property type="project" value="UniProtKB-KW"/>
</dbReference>
<dbReference type="CDD" id="cd05471">
    <property type="entry name" value="pepsin_like"/>
    <property type="match status" value="1"/>
</dbReference>
<dbReference type="FunFam" id="2.40.70.10:FF:000060">
    <property type="entry name" value="Aspartic-type endopeptidase ctsD"/>
    <property type="match status" value="1"/>
</dbReference>
<dbReference type="Gene3D" id="2.40.70.10">
    <property type="entry name" value="Acid Proteases"/>
    <property type="match status" value="2"/>
</dbReference>
<dbReference type="InterPro" id="IPR001461">
    <property type="entry name" value="Aspartic_peptidase_A1"/>
</dbReference>
<dbReference type="InterPro" id="IPR001969">
    <property type="entry name" value="Aspartic_peptidase_AS"/>
</dbReference>
<dbReference type="InterPro" id="IPR034164">
    <property type="entry name" value="Pepsin-like_dom"/>
</dbReference>
<dbReference type="InterPro" id="IPR033121">
    <property type="entry name" value="PEPTIDASE_A1"/>
</dbReference>
<dbReference type="InterPro" id="IPR021109">
    <property type="entry name" value="Peptidase_aspartic_dom_sf"/>
</dbReference>
<dbReference type="PANTHER" id="PTHR47966">
    <property type="entry name" value="BETA-SITE APP-CLEAVING ENZYME, ISOFORM A-RELATED"/>
    <property type="match status" value="1"/>
</dbReference>
<dbReference type="PANTHER" id="PTHR47966:SF75">
    <property type="entry name" value="ENDOPEPTIDASE (CTSD), PUTATIVE (AFU_ORTHOLOGUE AFUA_4G07040)-RELATED"/>
    <property type="match status" value="1"/>
</dbReference>
<dbReference type="Pfam" id="PF00026">
    <property type="entry name" value="Asp"/>
    <property type="match status" value="1"/>
</dbReference>
<dbReference type="PRINTS" id="PR00792">
    <property type="entry name" value="PEPSIN"/>
</dbReference>
<dbReference type="SUPFAM" id="SSF50630">
    <property type="entry name" value="Acid proteases"/>
    <property type="match status" value="1"/>
</dbReference>
<dbReference type="PROSITE" id="PS00141">
    <property type="entry name" value="ASP_PROTEASE"/>
    <property type="match status" value="1"/>
</dbReference>
<dbReference type="PROSITE" id="PS51767">
    <property type="entry name" value="PEPTIDASE_A1"/>
    <property type="match status" value="1"/>
</dbReference>